<gene>
    <name evidence="1" type="primary">metK</name>
    <name type="ordered locus">Tcr_1821</name>
</gene>
<name>METK_HYDCU</name>
<keyword id="KW-0067">ATP-binding</keyword>
<keyword id="KW-0963">Cytoplasm</keyword>
<keyword id="KW-0460">Magnesium</keyword>
<keyword id="KW-0479">Metal-binding</keyword>
<keyword id="KW-0547">Nucleotide-binding</keyword>
<keyword id="KW-0554">One-carbon metabolism</keyword>
<keyword id="KW-0630">Potassium</keyword>
<keyword id="KW-0808">Transferase</keyword>
<proteinExistence type="inferred from homology"/>
<comment type="function">
    <text evidence="1">Catalyzes the formation of S-adenosylmethionine (AdoMet) from methionine and ATP. The overall synthetic reaction is composed of two sequential steps, AdoMet formation and the subsequent tripolyphosphate hydrolysis which occurs prior to release of AdoMet from the enzyme.</text>
</comment>
<comment type="catalytic activity">
    <reaction evidence="1">
        <text>L-methionine + ATP + H2O = S-adenosyl-L-methionine + phosphate + diphosphate</text>
        <dbReference type="Rhea" id="RHEA:21080"/>
        <dbReference type="ChEBI" id="CHEBI:15377"/>
        <dbReference type="ChEBI" id="CHEBI:30616"/>
        <dbReference type="ChEBI" id="CHEBI:33019"/>
        <dbReference type="ChEBI" id="CHEBI:43474"/>
        <dbReference type="ChEBI" id="CHEBI:57844"/>
        <dbReference type="ChEBI" id="CHEBI:59789"/>
        <dbReference type="EC" id="2.5.1.6"/>
    </reaction>
</comment>
<comment type="cofactor">
    <cofactor evidence="1">
        <name>Mg(2+)</name>
        <dbReference type="ChEBI" id="CHEBI:18420"/>
    </cofactor>
    <text evidence="1">Binds 2 divalent ions per subunit.</text>
</comment>
<comment type="cofactor">
    <cofactor evidence="1">
        <name>K(+)</name>
        <dbReference type="ChEBI" id="CHEBI:29103"/>
    </cofactor>
    <text evidence="1">Binds 1 potassium ion per subunit.</text>
</comment>
<comment type="pathway">
    <text evidence="1">Amino-acid biosynthesis; S-adenosyl-L-methionine biosynthesis; S-adenosyl-L-methionine from L-methionine: step 1/1.</text>
</comment>
<comment type="subunit">
    <text evidence="1">Homotetramer; dimer of dimers.</text>
</comment>
<comment type="subcellular location">
    <subcellularLocation>
        <location evidence="1">Cytoplasm</location>
    </subcellularLocation>
</comment>
<comment type="similarity">
    <text evidence="1">Belongs to the AdoMet synthase family.</text>
</comment>
<protein>
    <recommendedName>
        <fullName evidence="1">S-adenosylmethionine synthase</fullName>
        <shortName evidence="1">AdoMet synthase</shortName>
        <ecNumber evidence="1">2.5.1.6</ecNumber>
    </recommendedName>
    <alternativeName>
        <fullName evidence="1">MAT</fullName>
    </alternativeName>
    <alternativeName>
        <fullName evidence="1">Methionine adenosyltransferase</fullName>
    </alternativeName>
</protein>
<accession>Q31EL0</accession>
<reference key="1">
    <citation type="journal article" date="2006" name="PLoS Biol.">
        <title>The genome of deep-sea vent chemolithoautotroph Thiomicrospira crunogena XCL-2.</title>
        <authorList>
            <person name="Scott K.M."/>
            <person name="Sievert S.M."/>
            <person name="Abril F.N."/>
            <person name="Ball L.A."/>
            <person name="Barrett C.J."/>
            <person name="Blake R.A."/>
            <person name="Boller A.J."/>
            <person name="Chain P.S.G."/>
            <person name="Clark J.A."/>
            <person name="Davis C.R."/>
            <person name="Detter C."/>
            <person name="Do K.F."/>
            <person name="Dobrinski K.P."/>
            <person name="Faza B.I."/>
            <person name="Fitzpatrick K.A."/>
            <person name="Freyermuth S.K."/>
            <person name="Harmer T.L."/>
            <person name="Hauser L.J."/>
            <person name="Huegler M."/>
            <person name="Kerfeld C.A."/>
            <person name="Klotz M.G."/>
            <person name="Kong W.W."/>
            <person name="Land M."/>
            <person name="Lapidus A."/>
            <person name="Larimer F.W."/>
            <person name="Longo D.L."/>
            <person name="Lucas S."/>
            <person name="Malfatti S.A."/>
            <person name="Massey S.E."/>
            <person name="Martin D.D."/>
            <person name="McCuddin Z."/>
            <person name="Meyer F."/>
            <person name="Moore J.L."/>
            <person name="Ocampo L.H. Jr."/>
            <person name="Paul J.H."/>
            <person name="Paulsen I.T."/>
            <person name="Reep D.K."/>
            <person name="Ren Q."/>
            <person name="Ross R.L."/>
            <person name="Sato P.Y."/>
            <person name="Thomas P."/>
            <person name="Tinkham L.E."/>
            <person name="Zeruth G.T."/>
        </authorList>
    </citation>
    <scope>NUCLEOTIDE SEQUENCE [LARGE SCALE GENOMIC DNA]</scope>
    <source>
        <strain>DSM 25203 / XCL-2</strain>
    </source>
</reference>
<organism>
    <name type="scientific">Hydrogenovibrio crunogenus (strain DSM 25203 / XCL-2)</name>
    <name type="common">Thiomicrospira crunogena</name>
    <dbReference type="NCBI Taxonomy" id="317025"/>
    <lineage>
        <taxon>Bacteria</taxon>
        <taxon>Pseudomonadati</taxon>
        <taxon>Pseudomonadota</taxon>
        <taxon>Gammaproteobacteria</taxon>
        <taxon>Thiotrichales</taxon>
        <taxon>Piscirickettsiaceae</taxon>
        <taxon>Hydrogenovibrio</taxon>
    </lineage>
</organism>
<evidence type="ECO:0000255" key="1">
    <source>
        <dbReference type="HAMAP-Rule" id="MF_00086"/>
    </source>
</evidence>
<dbReference type="EC" id="2.5.1.6" evidence="1"/>
<dbReference type="EMBL" id="CP000109">
    <property type="protein sequence ID" value="ABB42413.1"/>
    <property type="molecule type" value="Genomic_DNA"/>
</dbReference>
<dbReference type="SMR" id="Q31EL0"/>
<dbReference type="STRING" id="317025.Tcr_1821"/>
<dbReference type="KEGG" id="tcx:Tcr_1821"/>
<dbReference type="eggNOG" id="COG0192">
    <property type="taxonomic scope" value="Bacteria"/>
</dbReference>
<dbReference type="HOGENOM" id="CLU_041802_1_1_6"/>
<dbReference type="OrthoDB" id="9801686at2"/>
<dbReference type="UniPathway" id="UPA00315">
    <property type="reaction ID" value="UER00080"/>
</dbReference>
<dbReference type="GO" id="GO:0005737">
    <property type="term" value="C:cytoplasm"/>
    <property type="evidence" value="ECO:0007669"/>
    <property type="project" value="UniProtKB-SubCell"/>
</dbReference>
<dbReference type="GO" id="GO:0005524">
    <property type="term" value="F:ATP binding"/>
    <property type="evidence" value="ECO:0007669"/>
    <property type="project" value="UniProtKB-UniRule"/>
</dbReference>
<dbReference type="GO" id="GO:0000287">
    <property type="term" value="F:magnesium ion binding"/>
    <property type="evidence" value="ECO:0007669"/>
    <property type="project" value="UniProtKB-UniRule"/>
</dbReference>
<dbReference type="GO" id="GO:0004478">
    <property type="term" value="F:methionine adenosyltransferase activity"/>
    <property type="evidence" value="ECO:0007669"/>
    <property type="project" value="UniProtKB-UniRule"/>
</dbReference>
<dbReference type="GO" id="GO:0006730">
    <property type="term" value="P:one-carbon metabolic process"/>
    <property type="evidence" value="ECO:0007669"/>
    <property type="project" value="UniProtKB-KW"/>
</dbReference>
<dbReference type="GO" id="GO:0006556">
    <property type="term" value="P:S-adenosylmethionine biosynthetic process"/>
    <property type="evidence" value="ECO:0007669"/>
    <property type="project" value="UniProtKB-UniRule"/>
</dbReference>
<dbReference type="CDD" id="cd18079">
    <property type="entry name" value="S-AdoMet_synt"/>
    <property type="match status" value="1"/>
</dbReference>
<dbReference type="FunFam" id="3.30.300.10:FF:000003">
    <property type="entry name" value="S-adenosylmethionine synthase"/>
    <property type="match status" value="1"/>
</dbReference>
<dbReference type="Gene3D" id="3.30.300.10">
    <property type="match status" value="3"/>
</dbReference>
<dbReference type="HAMAP" id="MF_00086">
    <property type="entry name" value="S_AdoMet_synth1"/>
    <property type="match status" value="1"/>
</dbReference>
<dbReference type="InterPro" id="IPR022631">
    <property type="entry name" value="ADOMET_SYNTHASE_CS"/>
</dbReference>
<dbReference type="InterPro" id="IPR022630">
    <property type="entry name" value="S-AdoMet_synt_C"/>
</dbReference>
<dbReference type="InterPro" id="IPR022629">
    <property type="entry name" value="S-AdoMet_synt_central"/>
</dbReference>
<dbReference type="InterPro" id="IPR022628">
    <property type="entry name" value="S-AdoMet_synt_N"/>
</dbReference>
<dbReference type="InterPro" id="IPR002133">
    <property type="entry name" value="S-AdoMet_synthetase"/>
</dbReference>
<dbReference type="InterPro" id="IPR022636">
    <property type="entry name" value="S-AdoMet_synthetase_sfam"/>
</dbReference>
<dbReference type="NCBIfam" id="TIGR01034">
    <property type="entry name" value="metK"/>
    <property type="match status" value="1"/>
</dbReference>
<dbReference type="PANTHER" id="PTHR11964">
    <property type="entry name" value="S-ADENOSYLMETHIONINE SYNTHETASE"/>
    <property type="match status" value="1"/>
</dbReference>
<dbReference type="Pfam" id="PF02773">
    <property type="entry name" value="S-AdoMet_synt_C"/>
    <property type="match status" value="1"/>
</dbReference>
<dbReference type="Pfam" id="PF02772">
    <property type="entry name" value="S-AdoMet_synt_M"/>
    <property type="match status" value="1"/>
</dbReference>
<dbReference type="Pfam" id="PF00438">
    <property type="entry name" value="S-AdoMet_synt_N"/>
    <property type="match status" value="1"/>
</dbReference>
<dbReference type="PIRSF" id="PIRSF000497">
    <property type="entry name" value="MAT"/>
    <property type="match status" value="1"/>
</dbReference>
<dbReference type="SUPFAM" id="SSF55973">
    <property type="entry name" value="S-adenosylmethionine synthetase"/>
    <property type="match status" value="3"/>
</dbReference>
<dbReference type="PROSITE" id="PS00376">
    <property type="entry name" value="ADOMET_SYNTHASE_1"/>
    <property type="match status" value="1"/>
</dbReference>
<dbReference type="PROSITE" id="PS00377">
    <property type="entry name" value="ADOMET_SYNTHASE_2"/>
    <property type="match status" value="1"/>
</dbReference>
<feature type="chain" id="PRO_0000241055" description="S-adenosylmethionine synthase">
    <location>
        <begin position="1"/>
        <end position="385"/>
    </location>
</feature>
<feature type="region of interest" description="Flexible loop" evidence="1">
    <location>
        <begin position="99"/>
        <end position="109"/>
    </location>
</feature>
<feature type="binding site" description="in other chain" evidence="1">
    <location>
        <position position="15"/>
    </location>
    <ligand>
        <name>ATP</name>
        <dbReference type="ChEBI" id="CHEBI:30616"/>
        <note>ligand shared between two neighboring subunits</note>
    </ligand>
</feature>
<feature type="binding site" evidence="1">
    <location>
        <position position="17"/>
    </location>
    <ligand>
        <name>Mg(2+)</name>
        <dbReference type="ChEBI" id="CHEBI:18420"/>
    </ligand>
</feature>
<feature type="binding site" evidence="1">
    <location>
        <position position="43"/>
    </location>
    <ligand>
        <name>K(+)</name>
        <dbReference type="ChEBI" id="CHEBI:29103"/>
    </ligand>
</feature>
<feature type="binding site" description="in other chain" evidence="1">
    <location>
        <position position="56"/>
    </location>
    <ligand>
        <name>L-methionine</name>
        <dbReference type="ChEBI" id="CHEBI:57844"/>
        <note>ligand shared between two neighboring subunits</note>
    </ligand>
</feature>
<feature type="binding site" description="in other chain" evidence="1">
    <location>
        <position position="99"/>
    </location>
    <ligand>
        <name>L-methionine</name>
        <dbReference type="ChEBI" id="CHEBI:57844"/>
        <note>ligand shared between two neighboring subunits</note>
    </ligand>
</feature>
<feature type="binding site" description="in other chain" evidence="1">
    <location>
        <begin position="164"/>
        <end position="166"/>
    </location>
    <ligand>
        <name>ATP</name>
        <dbReference type="ChEBI" id="CHEBI:30616"/>
        <note>ligand shared between two neighboring subunits</note>
    </ligand>
</feature>
<feature type="binding site" description="in other chain" evidence="1">
    <location>
        <begin position="230"/>
        <end position="231"/>
    </location>
    <ligand>
        <name>ATP</name>
        <dbReference type="ChEBI" id="CHEBI:30616"/>
        <note>ligand shared between two neighboring subunits</note>
    </ligand>
</feature>
<feature type="binding site" evidence="1">
    <location>
        <position position="239"/>
    </location>
    <ligand>
        <name>ATP</name>
        <dbReference type="ChEBI" id="CHEBI:30616"/>
        <note>ligand shared between two neighboring subunits</note>
    </ligand>
</feature>
<feature type="binding site" evidence="1">
    <location>
        <position position="239"/>
    </location>
    <ligand>
        <name>L-methionine</name>
        <dbReference type="ChEBI" id="CHEBI:57844"/>
        <note>ligand shared between two neighboring subunits</note>
    </ligand>
</feature>
<feature type="binding site" description="in other chain" evidence="1">
    <location>
        <begin position="245"/>
        <end position="246"/>
    </location>
    <ligand>
        <name>ATP</name>
        <dbReference type="ChEBI" id="CHEBI:30616"/>
        <note>ligand shared between two neighboring subunits</note>
    </ligand>
</feature>
<feature type="binding site" evidence="1">
    <location>
        <position position="262"/>
    </location>
    <ligand>
        <name>ATP</name>
        <dbReference type="ChEBI" id="CHEBI:30616"/>
        <note>ligand shared between two neighboring subunits</note>
    </ligand>
</feature>
<feature type="binding site" evidence="1">
    <location>
        <position position="266"/>
    </location>
    <ligand>
        <name>ATP</name>
        <dbReference type="ChEBI" id="CHEBI:30616"/>
        <note>ligand shared between two neighboring subunits</note>
    </ligand>
</feature>
<feature type="binding site" description="in other chain" evidence="1">
    <location>
        <position position="270"/>
    </location>
    <ligand>
        <name>L-methionine</name>
        <dbReference type="ChEBI" id="CHEBI:57844"/>
        <note>ligand shared between two neighboring subunits</note>
    </ligand>
</feature>
<sequence length="385" mass="41789">MTTTVFTSESVSEGHPDKIADQISDAMLDAIMKQDPKARVACETFVKTGMVMLGGEITTSAWVDQEELVRQVVNDIGYNHGDLGFDGETCAVLSSIGKQSPEIAQGVDEYEDHEQGAGDQGLMFGYASNETDVLMPAPIYFAHRLMEKQAELRKAGKLDWLRPDAKSQVTLRYEDGQPVAVDAVVLSTQHSPEVDNKDLHEAVMEEIIKPVLPEGWLHSGTQYHINPTGRFVIGGPVGDAGLTGRKIIVDTYGGMARHGGGAFSGKDPSKVDRSAAYAGRYVAKNIVAAGLADKCEIQVSYAIGVAAPTSISIETFGTEKVAVSLIEKLVREHFDLRPKGLIAMLDLYRPIYQKTASYGHFGRELPEFTWEKTDKAAALRADAGL</sequence>